<accession>Q1MFK4</accession>
<keyword id="KW-0169">Cobalamin biosynthesis</keyword>
<keyword id="KW-0328">Glycosyltransferase</keyword>
<keyword id="KW-0808">Transferase</keyword>
<evidence type="ECO:0000255" key="1">
    <source>
        <dbReference type="HAMAP-Rule" id="MF_00230"/>
    </source>
</evidence>
<feature type="chain" id="PRO_1000021621" description="Nicotinate-nucleotide--dimethylbenzimidazole phosphoribosyltransferase">
    <location>
        <begin position="1"/>
        <end position="338"/>
    </location>
</feature>
<feature type="active site" description="Proton acceptor" evidence="1">
    <location>
        <position position="305"/>
    </location>
</feature>
<sequence length="338" mass="34956">MSVSGLPFDDFRTLLRDLPGPDARALVAARERDAQLTKPPGALGRLEEIAFWLAAWTGRTPAVNRPLVAIFAGNHGVTKQGITPFPPTVTQQMVENFAAGGAAINQICVAYDLGLKVFDLALDYPTGDITEEAALSERDCAATMAFGMEAIAGGTDLLCIGEMGIGNTTIAAAINYALYGGSARDWVGPGTGSEGEMLERKIAAVEKAVALHGDHLDDPLEIMRRLGGREIAAMAGAILAARMERIPVLIDGYVATAAAAILKAANPSALDHCLIGHVSGEPGHLRAIEMLGKTPLLALGMRLGEGTGAALAAGIVKAAAACHSGMATFAQAGVSNKH</sequence>
<name>COBT_RHIJ3</name>
<proteinExistence type="inferred from homology"/>
<dbReference type="EC" id="2.4.2.21" evidence="1"/>
<dbReference type="EMBL" id="AM236080">
    <property type="protein sequence ID" value="CAK08270.1"/>
    <property type="molecule type" value="Genomic_DNA"/>
</dbReference>
<dbReference type="RefSeq" id="WP_011652311.1">
    <property type="nucleotide sequence ID" value="NC_008380.1"/>
</dbReference>
<dbReference type="SMR" id="Q1MFK4"/>
<dbReference type="EnsemblBacteria" id="CAK08270">
    <property type="protein sequence ID" value="CAK08270"/>
    <property type="gene ID" value="RL2781"/>
</dbReference>
<dbReference type="GeneID" id="61424281"/>
<dbReference type="KEGG" id="rle:RL2781"/>
<dbReference type="eggNOG" id="COG2038">
    <property type="taxonomic scope" value="Bacteria"/>
</dbReference>
<dbReference type="HOGENOM" id="CLU_002982_0_1_5"/>
<dbReference type="UniPathway" id="UPA00061">
    <property type="reaction ID" value="UER00516"/>
</dbReference>
<dbReference type="Proteomes" id="UP000006575">
    <property type="component" value="Chromosome"/>
</dbReference>
<dbReference type="GO" id="GO:0008939">
    <property type="term" value="F:nicotinate-nucleotide-dimethylbenzimidazole phosphoribosyltransferase activity"/>
    <property type="evidence" value="ECO:0007669"/>
    <property type="project" value="UniProtKB-UniRule"/>
</dbReference>
<dbReference type="GO" id="GO:0009236">
    <property type="term" value="P:cobalamin biosynthetic process"/>
    <property type="evidence" value="ECO:0007669"/>
    <property type="project" value="UniProtKB-KW"/>
</dbReference>
<dbReference type="CDD" id="cd02439">
    <property type="entry name" value="DMB-PRT_CobT"/>
    <property type="match status" value="1"/>
</dbReference>
<dbReference type="Gene3D" id="1.10.1610.10">
    <property type="match status" value="1"/>
</dbReference>
<dbReference type="Gene3D" id="3.40.50.10210">
    <property type="match status" value="1"/>
</dbReference>
<dbReference type="HAMAP" id="MF_00230">
    <property type="entry name" value="CobT"/>
    <property type="match status" value="1"/>
</dbReference>
<dbReference type="InterPro" id="IPR003200">
    <property type="entry name" value="Nict_dMeBzImd_PRibTrfase"/>
</dbReference>
<dbReference type="InterPro" id="IPR017846">
    <property type="entry name" value="Nict_dMeBzImd_PRibTrfase_bact"/>
</dbReference>
<dbReference type="InterPro" id="IPR023195">
    <property type="entry name" value="Nict_dMeBzImd_PRibTrfase_N"/>
</dbReference>
<dbReference type="InterPro" id="IPR036087">
    <property type="entry name" value="Nict_dMeBzImd_PRibTrfase_sf"/>
</dbReference>
<dbReference type="NCBIfam" id="TIGR03160">
    <property type="entry name" value="cobT_DBIPRT"/>
    <property type="match status" value="1"/>
</dbReference>
<dbReference type="NCBIfam" id="NF000996">
    <property type="entry name" value="PRK00105.1"/>
    <property type="match status" value="1"/>
</dbReference>
<dbReference type="PANTHER" id="PTHR43463">
    <property type="entry name" value="NICOTINATE-NUCLEOTIDE--DIMETHYLBENZIMIDAZOLE PHOSPHORIBOSYLTRANSFERASE"/>
    <property type="match status" value="1"/>
</dbReference>
<dbReference type="PANTHER" id="PTHR43463:SF1">
    <property type="entry name" value="NICOTINATE-NUCLEOTIDE--DIMETHYLBENZIMIDAZOLE PHOSPHORIBOSYLTRANSFERASE"/>
    <property type="match status" value="1"/>
</dbReference>
<dbReference type="Pfam" id="PF02277">
    <property type="entry name" value="DBI_PRT"/>
    <property type="match status" value="1"/>
</dbReference>
<dbReference type="SUPFAM" id="SSF52733">
    <property type="entry name" value="Nicotinate mononucleotide:5,6-dimethylbenzimidazole phosphoribosyltransferase (CobT)"/>
    <property type="match status" value="1"/>
</dbReference>
<gene>
    <name evidence="1" type="primary">cobT</name>
    <name type="ordered locus">RL2781</name>
</gene>
<organism>
    <name type="scientific">Rhizobium johnstonii (strain DSM 114642 / LMG 32736 / 3841)</name>
    <name type="common">Rhizobium leguminosarum bv. viciae</name>
    <dbReference type="NCBI Taxonomy" id="216596"/>
    <lineage>
        <taxon>Bacteria</taxon>
        <taxon>Pseudomonadati</taxon>
        <taxon>Pseudomonadota</taxon>
        <taxon>Alphaproteobacteria</taxon>
        <taxon>Hyphomicrobiales</taxon>
        <taxon>Rhizobiaceae</taxon>
        <taxon>Rhizobium/Agrobacterium group</taxon>
        <taxon>Rhizobium</taxon>
        <taxon>Rhizobium johnstonii</taxon>
    </lineage>
</organism>
<protein>
    <recommendedName>
        <fullName evidence="1">Nicotinate-nucleotide--dimethylbenzimidazole phosphoribosyltransferase</fullName>
        <shortName evidence="1">NN:DBI PRT</shortName>
        <ecNumber evidence="1">2.4.2.21</ecNumber>
    </recommendedName>
    <alternativeName>
        <fullName evidence="1">N(1)-alpha-phosphoribosyltransferase</fullName>
    </alternativeName>
</protein>
<reference key="1">
    <citation type="journal article" date="2006" name="Genome Biol.">
        <title>The genome of Rhizobium leguminosarum has recognizable core and accessory components.</title>
        <authorList>
            <person name="Young J.P.W."/>
            <person name="Crossman L.C."/>
            <person name="Johnston A.W.B."/>
            <person name="Thomson N.R."/>
            <person name="Ghazoui Z.F."/>
            <person name="Hull K.H."/>
            <person name="Wexler M."/>
            <person name="Curson A.R.J."/>
            <person name="Todd J.D."/>
            <person name="Poole P.S."/>
            <person name="Mauchline T.H."/>
            <person name="East A.K."/>
            <person name="Quail M.A."/>
            <person name="Churcher C."/>
            <person name="Arrowsmith C."/>
            <person name="Cherevach I."/>
            <person name="Chillingworth T."/>
            <person name="Clarke K."/>
            <person name="Cronin A."/>
            <person name="Davis P."/>
            <person name="Fraser A."/>
            <person name="Hance Z."/>
            <person name="Hauser H."/>
            <person name="Jagels K."/>
            <person name="Moule S."/>
            <person name="Mungall K."/>
            <person name="Norbertczak H."/>
            <person name="Rabbinowitsch E."/>
            <person name="Sanders M."/>
            <person name="Simmonds M."/>
            <person name="Whitehead S."/>
            <person name="Parkhill J."/>
        </authorList>
    </citation>
    <scope>NUCLEOTIDE SEQUENCE [LARGE SCALE GENOMIC DNA]</scope>
    <source>
        <strain>DSM 114642 / LMG 32736 / 3841</strain>
    </source>
</reference>
<comment type="function">
    <text evidence="1">Catalyzes the synthesis of alpha-ribazole-5'-phosphate from nicotinate mononucleotide (NAMN) and 5,6-dimethylbenzimidazole (DMB).</text>
</comment>
<comment type="catalytic activity">
    <reaction evidence="1">
        <text>5,6-dimethylbenzimidazole + nicotinate beta-D-ribonucleotide = alpha-ribazole 5'-phosphate + nicotinate + H(+)</text>
        <dbReference type="Rhea" id="RHEA:11196"/>
        <dbReference type="ChEBI" id="CHEBI:15378"/>
        <dbReference type="ChEBI" id="CHEBI:15890"/>
        <dbReference type="ChEBI" id="CHEBI:32544"/>
        <dbReference type="ChEBI" id="CHEBI:57502"/>
        <dbReference type="ChEBI" id="CHEBI:57918"/>
        <dbReference type="EC" id="2.4.2.21"/>
    </reaction>
</comment>
<comment type="pathway">
    <text evidence="1">Nucleoside biosynthesis; alpha-ribazole biosynthesis; alpha-ribazole from 5,6-dimethylbenzimidazole: step 1/2.</text>
</comment>
<comment type="similarity">
    <text evidence="1">Belongs to the CobT family.</text>
</comment>